<proteinExistence type="evidence at transcript level"/>
<dbReference type="EMBL" id="CR857730">
    <property type="protein sequence ID" value="CAH89998.1"/>
    <property type="molecule type" value="mRNA"/>
</dbReference>
<dbReference type="RefSeq" id="NP_001124948.1">
    <property type="nucleotide sequence ID" value="NM_001131476.2"/>
</dbReference>
<dbReference type="SMR" id="Q5RE09"/>
<dbReference type="FunCoup" id="Q5RE09">
    <property type="interactions" value="2625"/>
</dbReference>
<dbReference type="STRING" id="9601.ENSPPYP00000008390"/>
<dbReference type="GeneID" id="100171820"/>
<dbReference type="KEGG" id="pon:100171820"/>
<dbReference type="CTD" id="1783"/>
<dbReference type="eggNOG" id="KOG3905">
    <property type="taxonomic scope" value="Eukaryota"/>
</dbReference>
<dbReference type="InParanoid" id="Q5RE09"/>
<dbReference type="OrthoDB" id="27603at2759"/>
<dbReference type="Proteomes" id="UP000001595">
    <property type="component" value="Unplaced"/>
</dbReference>
<dbReference type="GO" id="GO:0005813">
    <property type="term" value="C:centrosome"/>
    <property type="evidence" value="ECO:0007669"/>
    <property type="project" value="TreeGrafter"/>
</dbReference>
<dbReference type="GO" id="GO:0005737">
    <property type="term" value="C:cytoplasm"/>
    <property type="evidence" value="ECO:0007669"/>
    <property type="project" value="UniProtKB-KW"/>
</dbReference>
<dbReference type="GO" id="GO:0005868">
    <property type="term" value="C:cytoplasmic dynein complex"/>
    <property type="evidence" value="ECO:0007669"/>
    <property type="project" value="InterPro"/>
</dbReference>
<dbReference type="GO" id="GO:0005874">
    <property type="term" value="C:microtubule"/>
    <property type="evidence" value="ECO:0007669"/>
    <property type="project" value="UniProtKB-KW"/>
</dbReference>
<dbReference type="GO" id="GO:0005524">
    <property type="term" value="F:ATP binding"/>
    <property type="evidence" value="ECO:0007669"/>
    <property type="project" value="UniProtKB-KW"/>
</dbReference>
<dbReference type="GO" id="GO:0045504">
    <property type="term" value="F:dynein heavy chain binding"/>
    <property type="evidence" value="ECO:0007669"/>
    <property type="project" value="TreeGrafter"/>
</dbReference>
<dbReference type="GO" id="GO:0000226">
    <property type="term" value="P:microtubule cytoskeleton organization"/>
    <property type="evidence" value="ECO:0007669"/>
    <property type="project" value="TreeGrafter"/>
</dbReference>
<dbReference type="GO" id="GO:0007018">
    <property type="term" value="P:microtubule-based movement"/>
    <property type="evidence" value="ECO:0007669"/>
    <property type="project" value="InterPro"/>
</dbReference>
<dbReference type="Gene3D" id="3.40.50.300">
    <property type="entry name" value="P-loop containing nucleotide triphosphate hydrolases"/>
    <property type="match status" value="1"/>
</dbReference>
<dbReference type="InterPro" id="IPR008467">
    <property type="entry name" value="Dynein1_light_intermed_chain"/>
</dbReference>
<dbReference type="InterPro" id="IPR022780">
    <property type="entry name" value="Dynein_light_int_chain"/>
</dbReference>
<dbReference type="InterPro" id="IPR027417">
    <property type="entry name" value="P-loop_NTPase"/>
</dbReference>
<dbReference type="PANTHER" id="PTHR12688:SF1">
    <property type="entry name" value="CYTOPLASMIC DYNEIN 1 LIGHT INTERMEDIATE CHAIN 2"/>
    <property type="match status" value="1"/>
</dbReference>
<dbReference type="PANTHER" id="PTHR12688">
    <property type="entry name" value="DYNEIN LIGHT INTERMEDIATE CHAIN"/>
    <property type="match status" value="1"/>
</dbReference>
<dbReference type="Pfam" id="PF05783">
    <property type="entry name" value="DLIC"/>
    <property type="match status" value="1"/>
</dbReference>
<dbReference type="SUPFAM" id="SSF52540">
    <property type="entry name" value="P-loop containing nucleoside triphosphate hydrolases"/>
    <property type="match status" value="1"/>
</dbReference>
<accession>Q5RE09</accession>
<evidence type="ECO:0000250" key="1">
    <source>
        <dbReference type="UniProtKB" id="O43237"/>
    </source>
</evidence>
<evidence type="ECO:0000255" key="2"/>
<evidence type="ECO:0000256" key="3">
    <source>
        <dbReference type="SAM" id="MobiDB-lite"/>
    </source>
</evidence>
<evidence type="ECO:0000305" key="4"/>
<gene>
    <name type="primary">DYNC1LI2</name>
    <name type="synonym">DNCLI2</name>
</gene>
<sequence>MAPVGVEKKLLLGPNGPAVAAAGDLTSEEEEGQSLWSSILSEVSTRAGSKLPSGKNILVFGEDGSGKTTLMTKLQGAEHGKKGRGLEYLYLSVHDEDRDDHTRCNVWILDGDLYHKGLLKFAVSAESLPETLVIFVADMSRPWTVMESLQKWASVLREHIDKMKIPPEKMRELERKFVKDFQDYMEPEEGCQGSPQRRGPLTSGSDEENVALPLGDNVLTHNLGIPVLVVCTKCDAVSVLEKEHDYRDEHLDFIQSHLRRFCLQYGAALIYTSVKEEKNLDLLYKYIVHKTYGFHFTTPALVVEKDAVFIPAGWDNEKKIAILHENFTTVKPEDAYEDFIVKPPVRKLVHDKELAAEDEQVFLMKQQSLLAKQPATPTRASESPARGPSGSPRTQGRGGPASVPSSFPGTSVKKPDPNIKNNAASEGVLASFFNSLLSKKTGSPGSPGAGGVQSTAKKSGQKTVLSNVQEELDRMTRKPDSMVTNSSTENEA</sequence>
<comment type="function">
    <text evidence="1">Acts as one of several non-catalytic accessory components of the cytoplasmic dynein 1 complex that are thought to be involved in linking dynein to cargos and to adapter proteins that regulate dynein function. Cytoplasmic dynein 1 acts as a motor for the intracellular retrograde motility of vesicles and organelles along microtubules. May play a role in binding dynein to membranous organelles or chromosomes.</text>
</comment>
<comment type="subunit">
    <text evidence="1">Homodimer. The cytoplasmic dynein 1 complex consists of two catalytic heavy chains (HCs) and a number of non-catalytic subunits presented by intermediate chains (ICs), light intermediate chains (LICs) and light chains (LCs); the composition seems to vary in respect to the IC, LIC and LC composition. The heavy chain homodimer serves as a scaffold for the probable homodimeric assembly of the respective non-catalytic subunits. The ICs and LICs bind directly to the HC dimer and the LCs assemble on the IC dimer. Interacts with DYNC1H1; DYNC1LI1 and DYNC1LI2 bind mutually exclusive to DYNC1H.</text>
</comment>
<comment type="subcellular location">
    <subcellularLocation>
        <location evidence="1">Cytoplasm</location>
        <location evidence="1">Cytoskeleton</location>
    </subcellularLocation>
</comment>
<comment type="similarity">
    <text evidence="4">Belongs to the dynein light intermediate chain family.</text>
</comment>
<organism>
    <name type="scientific">Pongo abelii</name>
    <name type="common">Sumatran orangutan</name>
    <name type="synonym">Pongo pygmaeus abelii</name>
    <dbReference type="NCBI Taxonomy" id="9601"/>
    <lineage>
        <taxon>Eukaryota</taxon>
        <taxon>Metazoa</taxon>
        <taxon>Chordata</taxon>
        <taxon>Craniata</taxon>
        <taxon>Vertebrata</taxon>
        <taxon>Euteleostomi</taxon>
        <taxon>Mammalia</taxon>
        <taxon>Eutheria</taxon>
        <taxon>Euarchontoglires</taxon>
        <taxon>Primates</taxon>
        <taxon>Haplorrhini</taxon>
        <taxon>Catarrhini</taxon>
        <taxon>Hominidae</taxon>
        <taxon>Pongo</taxon>
    </lineage>
</organism>
<keyword id="KW-0067">ATP-binding</keyword>
<keyword id="KW-0963">Cytoplasm</keyword>
<keyword id="KW-0206">Cytoskeleton</keyword>
<keyword id="KW-0243">Dynein</keyword>
<keyword id="KW-0488">Methylation</keyword>
<keyword id="KW-0493">Microtubule</keyword>
<keyword id="KW-0505">Motor protein</keyword>
<keyword id="KW-0547">Nucleotide-binding</keyword>
<keyword id="KW-0597">Phosphoprotein</keyword>
<keyword id="KW-1185">Reference proteome</keyword>
<keyword id="KW-0813">Transport</keyword>
<name>DC1L2_PONAB</name>
<protein>
    <recommendedName>
        <fullName>Cytoplasmic dynein 1 light intermediate chain 2</fullName>
    </recommendedName>
    <alternativeName>
        <fullName>Dynein light intermediate chain 2, cytosolic</fullName>
    </alternativeName>
</protein>
<reference key="1">
    <citation type="submission" date="2004-11" db="EMBL/GenBank/DDBJ databases">
        <authorList>
            <consortium name="The German cDNA consortium"/>
        </authorList>
    </citation>
    <scope>NUCLEOTIDE SEQUENCE [LARGE SCALE MRNA]</scope>
    <source>
        <tissue>Kidney</tissue>
    </source>
</reference>
<feature type="chain" id="PRO_0000114673" description="Cytoplasmic dynein 1 light intermediate chain 2">
    <location>
        <begin position="1"/>
        <end position="492"/>
    </location>
</feature>
<feature type="region of interest" description="Disordered" evidence="3">
    <location>
        <begin position="187"/>
        <end position="206"/>
    </location>
</feature>
<feature type="region of interest" description="Disordered" evidence="3">
    <location>
        <begin position="371"/>
        <end position="423"/>
    </location>
</feature>
<feature type="region of interest" description="Disordered" evidence="3">
    <location>
        <begin position="437"/>
        <end position="492"/>
    </location>
</feature>
<feature type="compositionally biased region" description="Polar residues" evidence="3">
    <location>
        <begin position="371"/>
        <end position="381"/>
    </location>
</feature>
<feature type="compositionally biased region" description="Polar residues" evidence="3">
    <location>
        <begin position="452"/>
        <end position="469"/>
    </location>
</feature>
<feature type="compositionally biased region" description="Basic and acidic residues" evidence="3">
    <location>
        <begin position="471"/>
        <end position="480"/>
    </location>
</feature>
<feature type="compositionally biased region" description="Polar residues" evidence="3">
    <location>
        <begin position="482"/>
        <end position="492"/>
    </location>
</feature>
<feature type="binding site" evidence="2">
    <location>
        <begin position="61"/>
        <end position="68"/>
    </location>
    <ligand>
        <name>ATP</name>
        <dbReference type="ChEBI" id="CHEBI:30616"/>
    </ligand>
</feature>
<feature type="modified residue" description="Phosphoserine" evidence="1">
    <location>
        <position position="194"/>
    </location>
</feature>
<feature type="modified residue" description="Phosphoserine" evidence="1">
    <location>
        <position position="383"/>
    </location>
</feature>
<feature type="modified residue" description="Phosphoserine" evidence="1">
    <location>
        <position position="391"/>
    </location>
</feature>
<feature type="modified residue" description="Omega-N-methylarginine" evidence="1">
    <location>
        <position position="397"/>
    </location>
</feature>
<feature type="modified residue" description="Phosphothreonine" evidence="1">
    <location>
        <position position="441"/>
    </location>
</feature>
<feature type="modified residue" description="Phosphoserine" evidence="1">
    <location>
        <position position="443"/>
    </location>
</feature>
<feature type="modified residue" description="Phosphoserine" evidence="1">
    <location>
        <position position="446"/>
    </location>
</feature>